<comment type="function">
    <text evidence="1">Required for disulfide bond formation in some periplasmic proteins. Acts by oxidizing the DsbA protein.</text>
</comment>
<comment type="subcellular location">
    <subcellularLocation>
        <location evidence="1">Cell inner membrane</location>
        <topology evidence="1">Multi-pass membrane protein</topology>
    </subcellularLocation>
</comment>
<comment type="similarity">
    <text evidence="1">Belongs to the DsbB family.</text>
</comment>
<evidence type="ECO:0000255" key="1">
    <source>
        <dbReference type="HAMAP-Rule" id="MF_00286"/>
    </source>
</evidence>
<keyword id="KW-0997">Cell inner membrane</keyword>
<keyword id="KW-1003">Cell membrane</keyword>
<keyword id="KW-0143">Chaperone</keyword>
<keyword id="KW-1015">Disulfide bond</keyword>
<keyword id="KW-0249">Electron transport</keyword>
<keyword id="KW-0472">Membrane</keyword>
<keyword id="KW-0560">Oxidoreductase</keyword>
<keyword id="KW-0676">Redox-active center</keyword>
<keyword id="KW-0812">Transmembrane</keyword>
<keyword id="KW-1133">Transmembrane helix</keyword>
<keyword id="KW-0813">Transport</keyword>
<feature type="chain" id="PRO_0000298418" description="Disulfide bond formation protein B">
    <location>
        <begin position="1"/>
        <end position="176"/>
    </location>
</feature>
<feature type="topological domain" description="Cytoplasmic" evidence="1">
    <location>
        <begin position="1"/>
        <end position="14"/>
    </location>
</feature>
<feature type="transmembrane region" description="Helical" evidence="1">
    <location>
        <begin position="15"/>
        <end position="31"/>
    </location>
</feature>
<feature type="topological domain" description="Periplasmic" evidence="1">
    <location>
        <begin position="32"/>
        <end position="49"/>
    </location>
</feature>
<feature type="transmembrane region" description="Helical" evidence="1">
    <location>
        <begin position="50"/>
        <end position="65"/>
    </location>
</feature>
<feature type="topological domain" description="Cytoplasmic" evidence="1">
    <location>
        <begin position="66"/>
        <end position="71"/>
    </location>
</feature>
<feature type="transmembrane region" description="Helical" evidence="1">
    <location>
        <begin position="72"/>
        <end position="89"/>
    </location>
</feature>
<feature type="topological domain" description="Periplasmic" evidence="1">
    <location>
        <begin position="90"/>
        <end position="144"/>
    </location>
</feature>
<feature type="transmembrane region" description="Helical" evidence="1">
    <location>
        <begin position="145"/>
        <end position="163"/>
    </location>
</feature>
<feature type="topological domain" description="Cytoplasmic" evidence="1">
    <location>
        <begin position="164"/>
        <end position="176"/>
    </location>
</feature>
<feature type="disulfide bond" description="Redox-active" evidence="1">
    <location>
        <begin position="41"/>
        <end position="44"/>
    </location>
</feature>
<feature type="disulfide bond" description="Redox-active" evidence="1">
    <location>
        <begin position="104"/>
        <end position="130"/>
    </location>
</feature>
<sequence>MMRSLNRCSKHRAAWLLLALTTFSLELVALYFQHVMLLKPCVLCVYQRCALYGVVAAGLVGAIAPATPLRFSGLAIWLYSAWEGLQLAMKHTDIQLHPSPFVTCDFFVSFPAWLPLDKWLPSVFSASGDCAVRQWHFLSLEMPQWMIVIFGAYLAVAVLILLAQFFPPRKRDLFSR</sequence>
<proteinExistence type="inferred from homology"/>
<accession>Q2NTB0</accession>
<protein>
    <recommendedName>
        <fullName evidence="1">Disulfide bond formation protein B</fullName>
    </recommendedName>
    <alternativeName>
        <fullName evidence="1">Disulfide oxidoreductase</fullName>
    </alternativeName>
</protein>
<dbReference type="EMBL" id="AP008232">
    <property type="protein sequence ID" value="BAE74615.1"/>
    <property type="molecule type" value="Genomic_DNA"/>
</dbReference>
<dbReference type="RefSeq" id="WP_011411168.1">
    <property type="nucleotide sequence ID" value="NC_007712.1"/>
</dbReference>
<dbReference type="SMR" id="Q2NTB0"/>
<dbReference type="STRING" id="343509.SG1340"/>
<dbReference type="KEGG" id="sgl:SG1340"/>
<dbReference type="eggNOG" id="COG1495">
    <property type="taxonomic scope" value="Bacteria"/>
</dbReference>
<dbReference type="HOGENOM" id="CLU_098660_2_0_6"/>
<dbReference type="OrthoDB" id="3711263at2"/>
<dbReference type="BioCyc" id="SGLO343509:SGP1_RS11780-MONOMER"/>
<dbReference type="Proteomes" id="UP000001932">
    <property type="component" value="Chromosome"/>
</dbReference>
<dbReference type="GO" id="GO:0005886">
    <property type="term" value="C:plasma membrane"/>
    <property type="evidence" value="ECO:0007669"/>
    <property type="project" value="UniProtKB-SubCell"/>
</dbReference>
<dbReference type="GO" id="GO:0009055">
    <property type="term" value="F:electron transfer activity"/>
    <property type="evidence" value="ECO:0007669"/>
    <property type="project" value="UniProtKB-UniRule"/>
</dbReference>
<dbReference type="GO" id="GO:0015035">
    <property type="term" value="F:protein-disulfide reductase activity"/>
    <property type="evidence" value="ECO:0007669"/>
    <property type="project" value="UniProtKB-UniRule"/>
</dbReference>
<dbReference type="GO" id="GO:0006457">
    <property type="term" value="P:protein folding"/>
    <property type="evidence" value="ECO:0007669"/>
    <property type="project" value="InterPro"/>
</dbReference>
<dbReference type="FunFam" id="1.20.1550.10:FF:000001">
    <property type="entry name" value="Disulfide bond formation protein B"/>
    <property type="match status" value="1"/>
</dbReference>
<dbReference type="Gene3D" id="1.20.1550.10">
    <property type="entry name" value="DsbB-like"/>
    <property type="match status" value="1"/>
</dbReference>
<dbReference type="HAMAP" id="MF_00286">
    <property type="entry name" value="DsbB"/>
    <property type="match status" value="1"/>
</dbReference>
<dbReference type="InterPro" id="IPR003752">
    <property type="entry name" value="DiS_bond_form_DsbB/BdbC"/>
</dbReference>
<dbReference type="InterPro" id="IPR022920">
    <property type="entry name" value="Disulphide_bond_form_DsbB"/>
</dbReference>
<dbReference type="InterPro" id="IPR050183">
    <property type="entry name" value="DsbB"/>
</dbReference>
<dbReference type="InterPro" id="IPR023380">
    <property type="entry name" value="DsbB-like_sf"/>
</dbReference>
<dbReference type="NCBIfam" id="NF002485">
    <property type="entry name" value="PRK01749.1"/>
    <property type="match status" value="1"/>
</dbReference>
<dbReference type="PANTHER" id="PTHR36570">
    <property type="entry name" value="DISULFIDE BOND FORMATION PROTEIN B"/>
    <property type="match status" value="1"/>
</dbReference>
<dbReference type="PANTHER" id="PTHR36570:SF2">
    <property type="entry name" value="DISULFIDE BOND FORMATION PROTEIN B"/>
    <property type="match status" value="1"/>
</dbReference>
<dbReference type="Pfam" id="PF02600">
    <property type="entry name" value="DsbB"/>
    <property type="match status" value="1"/>
</dbReference>
<dbReference type="SUPFAM" id="SSF158442">
    <property type="entry name" value="DsbB-like"/>
    <property type="match status" value="1"/>
</dbReference>
<name>DSBB_SODGM</name>
<reference key="1">
    <citation type="journal article" date="2006" name="Genome Res.">
        <title>Massive genome erosion and functional adaptations provide insights into the symbiotic lifestyle of Sodalis glossinidius in the tsetse host.</title>
        <authorList>
            <person name="Toh H."/>
            <person name="Weiss B.L."/>
            <person name="Perkin S.A.H."/>
            <person name="Yamashita A."/>
            <person name="Oshima K."/>
            <person name="Hattori M."/>
            <person name="Aksoy S."/>
        </authorList>
    </citation>
    <scope>NUCLEOTIDE SEQUENCE [LARGE SCALE GENOMIC DNA]</scope>
    <source>
        <strain>morsitans</strain>
    </source>
</reference>
<gene>
    <name evidence="1" type="primary">dsbB</name>
    <name type="ordered locus">SG1340</name>
</gene>
<organism>
    <name type="scientific">Sodalis glossinidius (strain morsitans)</name>
    <dbReference type="NCBI Taxonomy" id="343509"/>
    <lineage>
        <taxon>Bacteria</taxon>
        <taxon>Pseudomonadati</taxon>
        <taxon>Pseudomonadota</taxon>
        <taxon>Gammaproteobacteria</taxon>
        <taxon>Enterobacterales</taxon>
        <taxon>Bruguierivoracaceae</taxon>
        <taxon>Sodalis</taxon>
    </lineage>
</organism>